<keyword id="KW-0030">Aminoacyl-tRNA synthetase</keyword>
<keyword id="KW-0067">ATP-binding</keyword>
<keyword id="KW-0963">Cytoplasm</keyword>
<keyword id="KW-0436">Ligase</keyword>
<keyword id="KW-0460">Magnesium</keyword>
<keyword id="KW-0479">Metal-binding</keyword>
<keyword id="KW-0547">Nucleotide-binding</keyword>
<keyword id="KW-0648">Protein biosynthesis</keyword>
<gene>
    <name evidence="1" type="primary">pheS</name>
    <name type="ordered locus">XAC2590</name>
</gene>
<feature type="chain" id="PRO_0000126798" description="Phenylalanine--tRNA ligase alpha subunit">
    <location>
        <begin position="1"/>
        <end position="331"/>
    </location>
</feature>
<feature type="binding site" evidence="1">
    <location>
        <position position="252"/>
    </location>
    <ligand>
        <name>Mg(2+)</name>
        <dbReference type="ChEBI" id="CHEBI:18420"/>
        <note>shared with beta subunit</note>
    </ligand>
</feature>
<organism>
    <name type="scientific">Xanthomonas axonopodis pv. citri (strain 306)</name>
    <dbReference type="NCBI Taxonomy" id="190486"/>
    <lineage>
        <taxon>Bacteria</taxon>
        <taxon>Pseudomonadati</taxon>
        <taxon>Pseudomonadota</taxon>
        <taxon>Gammaproteobacteria</taxon>
        <taxon>Lysobacterales</taxon>
        <taxon>Lysobacteraceae</taxon>
        <taxon>Xanthomonas</taxon>
    </lineage>
</organism>
<comment type="catalytic activity">
    <reaction evidence="1">
        <text>tRNA(Phe) + L-phenylalanine + ATP = L-phenylalanyl-tRNA(Phe) + AMP + diphosphate + H(+)</text>
        <dbReference type="Rhea" id="RHEA:19413"/>
        <dbReference type="Rhea" id="RHEA-COMP:9668"/>
        <dbReference type="Rhea" id="RHEA-COMP:9699"/>
        <dbReference type="ChEBI" id="CHEBI:15378"/>
        <dbReference type="ChEBI" id="CHEBI:30616"/>
        <dbReference type="ChEBI" id="CHEBI:33019"/>
        <dbReference type="ChEBI" id="CHEBI:58095"/>
        <dbReference type="ChEBI" id="CHEBI:78442"/>
        <dbReference type="ChEBI" id="CHEBI:78531"/>
        <dbReference type="ChEBI" id="CHEBI:456215"/>
        <dbReference type="EC" id="6.1.1.20"/>
    </reaction>
</comment>
<comment type="cofactor">
    <cofactor evidence="1">
        <name>Mg(2+)</name>
        <dbReference type="ChEBI" id="CHEBI:18420"/>
    </cofactor>
    <text evidence="1">Binds 2 magnesium ions per tetramer.</text>
</comment>
<comment type="subunit">
    <text evidence="1">Tetramer of two alpha and two beta subunits.</text>
</comment>
<comment type="subcellular location">
    <subcellularLocation>
        <location evidence="1">Cytoplasm</location>
    </subcellularLocation>
</comment>
<comment type="similarity">
    <text evidence="1">Belongs to the class-II aminoacyl-tRNA synthetase family. Phe-tRNA synthetase alpha subunit type 1 subfamily.</text>
</comment>
<dbReference type="EC" id="6.1.1.20" evidence="1"/>
<dbReference type="EMBL" id="AE008923">
    <property type="protein sequence ID" value="AAM37439.1"/>
    <property type="molecule type" value="Genomic_DNA"/>
</dbReference>
<dbReference type="RefSeq" id="WP_005930228.1">
    <property type="nucleotide sequence ID" value="NC_003919.1"/>
</dbReference>
<dbReference type="SMR" id="Q8PJE4"/>
<dbReference type="GeneID" id="66911698"/>
<dbReference type="KEGG" id="xac:XAC2590"/>
<dbReference type="eggNOG" id="COG0016">
    <property type="taxonomic scope" value="Bacteria"/>
</dbReference>
<dbReference type="HOGENOM" id="CLU_025086_0_1_6"/>
<dbReference type="Proteomes" id="UP000000576">
    <property type="component" value="Chromosome"/>
</dbReference>
<dbReference type="GO" id="GO:0005737">
    <property type="term" value="C:cytoplasm"/>
    <property type="evidence" value="ECO:0007669"/>
    <property type="project" value="UniProtKB-SubCell"/>
</dbReference>
<dbReference type="GO" id="GO:0005524">
    <property type="term" value="F:ATP binding"/>
    <property type="evidence" value="ECO:0007669"/>
    <property type="project" value="UniProtKB-UniRule"/>
</dbReference>
<dbReference type="GO" id="GO:0000287">
    <property type="term" value="F:magnesium ion binding"/>
    <property type="evidence" value="ECO:0007669"/>
    <property type="project" value="UniProtKB-UniRule"/>
</dbReference>
<dbReference type="GO" id="GO:0004826">
    <property type="term" value="F:phenylalanine-tRNA ligase activity"/>
    <property type="evidence" value="ECO:0007669"/>
    <property type="project" value="UniProtKB-UniRule"/>
</dbReference>
<dbReference type="GO" id="GO:0000049">
    <property type="term" value="F:tRNA binding"/>
    <property type="evidence" value="ECO:0007669"/>
    <property type="project" value="InterPro"/>
</dbReference>
<dbReference type="GO" id="GO:0006432">
    <property type="term" value="P:phenylalanyl-tRNA aminoacylation"/>
    <property type="evidence" value="ECO:0007669"/>
    <property type="project" value="UniProtKB-UniRule"/>
</dbReference>
<dbReference type="CDD" id="cd00496">
    <property type="entry name" value="PheRS_alpha_core"/>
    <property type="match status" value="1"/>
</dbReference>
<dbReference type="FunFam" id="3.30.930.10:FF:000003">
    <property type="entry name" value="Phenylalanine--tRNA ligase alpha subunit"/>
    <property type="match status" value="1"/>
</dbReference>
<dbReference type="Gene3D" id="3.30.930.10">
    <property type="entry name" value="Bira Bifunctional Protein, Domain 2"/>
    <property type="match status" value="1"/>
</dbReference>
<dbReference type="HAMAP" id="MF_00281">
    <property type="entry name" value="Phe_tRNA_synth_alpha1"/>
    <property type="match status" value="1"/>
</dbReference>
<dbReference type="InterPro" id="IPR006195">
    <property type="entry name" value="aa-tRNA-synth_II"/>
</dbReference>
<dbReference type="InterPro" id="IPR045864">
    <property type="entry name" value="aa-tRNA-synth_II/BPL/LPL"/>
</dbReference>
<dbReference type="InterPro" id="IPR004529">
    <property type="entry name" value="Phe-tRNA-synth_IIc_asu"/>
</dbReference>
<dbReference type="InterPro" id="IPR004188">
    <property type="entry name" value="Phe-tRNA_ligase_II_N"/>
</dbReference>
<dbReference type="InterPro" id="IPR022911">
    <property type="entry name" value="Phe_tRNA_ligase_alpha1_bac"/>
</dbReference>
<dbReference type="InterPro" id="IPR002319">
    <property type="entry name" value="Phenylalanyl-tRNA_Synthase"/>
</dbReference>
<dbReference type="InterPro" id="IPR010978">
    <property type="entry name" value="tRNA-bd_arm"/>
</dbReference>
<dbReference type="NCBIfam" id="TIGR00468">
    <property type="entry name" value="pheS"/>
    <property type="match status" value="1"/>
</dbReference>
<dbReference type="PANTHER" id="PTHR11538:SF41">
    <property type="entry name" value="PHENYLALANINE--TRNA LIGASE, MITOCHONDRIAL"/>
    <property type="match status" value="1"/>
</dbReference>
<dbReference type="PANTHER" id="PTHR11538">
    <property type="entry name" value="PHENYLALANYL-TRNA SYNTHETASE"/>
    <property type="match status" value="1"/>
</dbReference>
<dbReference type="Pfam" id="PF02912">
    <property type="entry name" value="Phe_tRNA-synt_N"/>
    <property type="match status" value="1"/>
</dbReference>
<dbReference type="Pfam" id="PF01409">
    <property type="entry name" value="tRNA-synt_2d"/>
    <property type="match status" value="1"/>
</dbReference>
<dbReference type="SUPFAM" id="SSF55681">
    <property type="entry name" value="Class II aaRS and biotin synthetases"/>
    <property type="match status" value="1"/>
</dbReference>
<dbReference type="SUPFAM" id="SSF46589">
    <property type="entry name" value="tRNA-binding arm"/>
    <property type="match status" value="1"/>
</dbReference>
<dbReference type="PROSITE" id="PS50862">
    <property type="entry name" value="AA_TRNA_LIGASE_II"/>
    <property type="match status" value="1"/>
</dbReference>
<reference key="1">
    <citation type="journal article" date="2002" name="Nature">
        <title>Comparison of the genomes of two Xanthomonas pathogens with differing host specificities.</title>
        <authorList>
            <person name="da Silva A.C.R."/>
            <person name="Ferro J.A."/>
            <person name="Reinach F.C."/>
            <person name="Farah C.S."/>
            <person name="Furlan L.R."/>
            <person name="Quaggio R.B."/>
            <person name="Monteiro-Vitorello C.B."/>
            <person name="Van Sluys M.A."/>
            <person name="Almeida N.F. Jr."/>
            <person name="Alves L.M.C."/>
            <person name="do Amaral A.M."/>
            <person name="Bertolini M.C."/>
            <person name="Camargo L.E.A."/>
            <person name="Camarotte G."/>
            <person name="Cannavan F."/>
            <person name="Cardozo J."/>
            <person name="Chambergo F."/>
            <person name="Ciapina L.P."/>
            <person name="Cicarelli R.M.B."/>
            <person name="Coutinho L.L."/>
            <person name="Cursino-Santos J.R."/>
            <person name="El-Dorry H."/>
            <person name="Faria J.B."/>
            <person name="Ferreira A.J.S."/>
            <person name="Ferreira R.C.C."/>
            <person name="Ferro M.I.T."/>
            <person name="Formighieri E.F."/>
            <person name="Franco M.C."/>
            <person name="Greggio C.C."/>
            <person name="Gruber A."/>
            <person name="Katsuyama A.M."/>
            <person name="Kishi L.T."/>
            <person name="Leite R.P."/>
            <person name="Lemos E.G.M."/>
            <person name="Lemos M.V.F."/>
            <person name="Locali E.C."/>
            <person name="Machado M.A."/>
            <person name="Madeira A.M.B.N."/>
            <person name="Martinez-Rossi N.M."/>
            <person name="Martins E.C."/>
            <person name="Meidanis J."/>
            <person name="Menck C.F.M."/>
            <person name="Miyaki C.Y."/>
            <person name="Moon D.H."/>
            <person name="Moreira L.M."/>
            <person name="Novo M.T.M."/>
            <person name="Okura V.K."/>
            <person name="Oliveira M.C."/>
            <person name="Oliveira V.R."/>
            <person name="Pereira H.A."/>
            <person name="Rossi A."/>
            <person name="Sena J.A.D."/>
            <person name="Silva C."/>
            <person name="de Souza R.F."/>
            <person name="Spinola L.A.F."/>
            <person name="Takita M.A."/>
            <person name="Tamura R.E."/>
            <person name="Teixeira E.C."/>
            <person name="Tezza R.I.D."/>
            <person name="Trindade dos Santos M."/>
            <person name="Truffi D."/>
            <person name="Tsai S.M."/>
            <person name="White F.F."/>
            <person name="Setubal J.C."/>
            <person name="Kitajima J.P."/>
        </authorList>
    </citation>
    <scope>NUCLEOTIDE SEQUENCE [LARGE SCALE GENOMIC DNA]</scope>
    <source>
        <strain>306</strain>
    </source>
</reference>
<evidence type="ECO:0000255" key="1">
    <source>
        <dbReference type="HAMAP-Rule" id="MF_00281"/>
    </source>
</evidence>
<protein>
    <recommendedName>
        <fullName evidence="1">Phenylalanine--tRNA ligase alpha subunit</fullName>
        <ecNumber evidence="1">6.1.1.20</ecNumber>
    </recommendedName>
    <alternativeName>
        <fullName evidence="1">Phenylalanyl-tRNA synthetase alpha subunit</fullName>
        <shortName evidence="1">PheRS</shortName>
    </alternativeName>
</protein>
<accession>Q8PJE4</accession>
<name>SYFA_XANAC</name>
<proteinExistence type="inferred from homology"/>
<sequence length="331" mass="37225">MSEIQSLTERALADVAAAQTPDQLEALRVALLGKSGSITAQLKQLGTLPAEQRKAAGEAINLSRDALTAALSERKHTLETAALDARLAGERIDVTLPGRRSERGGLHPVTRTLERIVEIFARLGYELSDGPEIEDDWHNFEALNFPPHHPARAMHDTFYFGDGRLLRTHTSGVQVRYMDAHKPPLRMIAAGKVYRSDSDQTHSPMFHQVEGLLVDEHSNFADLKGTLSEFVRAFFERDFEMRFRPSYFPFVEPGAEVDIAWQQPDGSTRWLEVLGCGMVHPNVLRSVGIDPERYTGFAFGLGVERFAMLRYGVNDLRAFFENDVRFLRQFA</sequence>